<sequence length="562" mass="62754">MAGRPGYSEVIFLYVVSVAVIARATDNMPVNKDVSKLFPLTLIHINDLHARFEETNMKSNVCTQKDQCIAGIARVYQKIKDLLKEYESKNPIYLNAGDNFQGTLWYNLLRWNVTADFIKKLKPAAMTLGNHEFDHTPKGLAPYLAELNKEGIPTIVANLVMNNDPDLKSSKIPKSIKLTVGKRKIGIIGVLYDKTHEIAQTGKVTLSNAVEAVRREAAALKKDNIDIIVVLSHCSYEEDKKIAAEAGDDIDVIVGAHSHSFLYSPDSKQPHDPKDKVEGPYPTLVESKNKRKIPIVQAKSFGKYVGRLTLYFDEEGEVKNWEGYPVFIDHKVQQDPQILKDLVPWRAKVEAIGSTVVGETMIELDRDSCRDQECTLGVLYADGFADQYTNDTFRPFAIIQAGNFRNPIKVGKITNGDIIEAAPFGSTADLIRLKGADIWDVAEHSFALDDEGRTNCLQVSGLRIVIDISKPVRSRVKKIEVMDYTNPKSDKLKPLDKEAEYYIVVPSYLADGKDGFSAMKRATARRTGPLDSDVFKNYVEKIKKVDNLKLGRVIVCKGSKCT</sequence>
<protein>
    <recommendedName>
        <fullName evidence="14 15 16 17 18">Apyrase</fullName>
        <ecNumber evidence="4 10">3.6.1.5</ecNumber>
    </recommendedName>
    <alternativeName>
        <fullName>ATP-diphosphatase</fullName>
        <shortName>ADPase</shortName>
    </alternativeName>
    <alternativeName>
        <fullName>ATP-diphosphohydrolase</fullName>
    </alternativeName>
    <alternativeName>
        <fullName>Adenosine diphosphatase</fullName>
    </alternativeName>
    <allergenName evidence="13 17 18">Aed a 1</allergenName>
</protein>
<reference key="1">
    <citation type="journal article" date="1995" name="Proc. Natl. Acad. Sci. U.S.A.">
        <title>The salivary gland-specific apyrase of the mosquito Aedes aegypti is a member of the 5'-nucleotidase family.</title>
        <authorList>
            <person name="Champagne D.E."/>
            <person name="Smartt C.T."/>
            <person name="Ribeiro J.M.C."/>
            <person name="James A.A."/>
        </authorList>
    </citation>
    <scope>NUCLEOTIDE SEQUENCE [MRNA]</scope>
    <scope>PROTEIN SEQUENCE OF 308-331 AND 498-521</scope>
    <scope>FUNCTION</scope>
    <scope>CATALYTIC ACTIVITY</scope>
    <scope>TISSUE SPECIFICITY</scope>
    <source>
        <strain>Rockefeller</strain>
        <tissue>Salivary gland</tissue>
    </source>
</reference>
<reference key="2">
    <citation type="journal article" date="1995" name="Exp. Parasitol.">
        <title>The apyrase gene of the vector mosquito, Aedes aegypti, is expressed specifically in the adult female salivary glands.</title>
        <authorList>
            <person name="Smartt C.T."/>
            <person name="Kim A.P."/>
            <person name="Grossman G.L."/>
            <person name="James A.A."/>
        </authorList>
    </citation>
    <scope>NUCLEOTIDE SEQUENCE [GENOMIC DNA]</scope>
    <scope>TISSUE SPECIFICITY</scope>
    <scope>DEVELOPMENTAL STAGE</scope>
    <source>
        <strain>Rockefeller</strain>
        <tissue>Salivary gland</tissue>
    </source>
</reference>
<reference key="3">
    <citation type="journal article" date="2007" name="Science">
        <title>Genome sequence of Aedes aegypti, a major arbovirus vector.</title>
        <authorList>
            <person name="Nene V."/>
            <person name="Wortman J.R."/>
            <person name="Lawson D."/>
            <person name="Haas B.J."/>
            <person name="Kodira C.D."/>
            <person name="Tu Z.J."/>
            <person name="Loftus B.J."/>
            <person name="Xi Z."/>
            <person name="Megy K."/>
            <person name="Grabherr M."/>
            <person name="Ren Q."/>
            <person name="Zdobnov E.M."/>
            <person name="Lobo N.F."/>
            <person name="Campbell K.S."/>
            <person name="Brown S.E."/>
            <person name="Bonaldo M.F."/>
            <person name="Zhu J."/>
            <person name="Sinkins S.P."/>
            <person name="Hogenkamp D.G."/>
            <person name="Amedeo P."/>
            <person name="Arensburger P."/>
            <person name="Atkinson P.W."/>
            <person name="Bidwell S.L."/>
            <person name="Biedler J."/>
            <person name="Birney E."/>
            <person name="Bruggner R.V."/>
            <person name="Costas J."/>
            <person name="Coy M.R."/>
            <person name="Crabtree J."/>
            <person name="Crawford M."/>
            <person name="DeBruyn B."/>
            <person name="DeCaprio D."/>
            <person name="Eiglmeier K."/>
            <person name="Eisenstadt E."/>
            <person name="El-Dorry H."/>
            <person name="Gelbart W.M."/>
            <person name="Gomes S.L."/>
            <person name="Hammond M."/>
            <person name="Hannick L.I."/>
            <person name="Hogan J.R."/>
            <person name="Holmes M.H."/>
            <person name="Jaffe D."/>
            <person name="Johnston S.J."/>
            <person name="Kennedy R.C."/>
            <person name="Koo H."/>
            <person name="Kravitz S."/>
            <person name="Kriventseva E.V."/>
            <person name="Kulp D."/>
            <person name="Labutti K."/>
            <person name="Lee E."/>
            <person name="Li S."/>
            <person name="Lovin D.D."/>
            <person name="Mao C."/>
            <person name="Mauceli E."/>
            <person name="Menck C.F."/>
            <person name="Miller J.R."/>
            <person name="Montgomery P."/>
            <person name="Mori A."/>
            <person name="Nascimento A.L."/>
            <person name="Naveira H.F."/>
            <person name="Nusbaum C."/>
            <person name="O'Leary S.B."/>
            <person name="Orvis J."/>
            <person name="Pertea M."/>
            <person name="Quesneville H."/>
            <person name="Reidenbach K.R."/>
            <person name="Rogers Y.-H.C."/>
            <person name="Roth C.W."/>
            <person name="Schneider J.R."/>
            <person name="Schatz M."/>
            <person name="Shumway M."/>
            <person name="Stanke M."/>
            <person name="Stinson E.O."/>
            <person name="Tubio J.M.C."/>
            <person name="Vanzee J.P."/>
            <person name="Verjovski-Almeida S."/>
            <person name="Werner D."/>
            <person name="White O.R."/>
            <person name="Wyder S."/>
            <person name="Zeng Q."/>
            <person name="Zhao Q."/>
            <person name="Zhao Y."/>
            <person name="Hill C.A."/>
            <person name="Raikhel A.S."/>
            <person name="Soares M.B."/>
            <person name="Knudson D.L."/>
            <person name="Lee N.H."/>
            <person name="Galagan J."/>
            <person name="Salzberg S.L."/>
            <person name="Paulsen I.T."/>
            <person name="Dimopoulos G."/>
            <person name="Collins F.H."/>
            <person name="Bruce B."/>
            <person name="Fraser-Liggett C.M."/>
            <person name="Severson D.W."/>
        </authorList>
    </citation>
    <scope>NUCLEOTIDE SEQUENCE [LARGE SCALE GENOMIC DNA]</scope>
    <source>
        <strain>LVPib12</strain>
    </source>
</reference>
<reference evidence="19" key="4">
    <citation type="journal article" date="1984" name="Comp. Biochem. Physiol.">
        <title>Salivary apyrase of Aedes aegypti: characterization and secretory fate.</title>
        <authorList>
            <person name="Ribeiro J.M."/>
            <person name="Sarkis J.J."/>
            <person name="Rossignol P.A."/>
            <person name="Spielman A."/>
        </authorList>
    </citation>
    <scope>FUNCTION</scope>
    <scope>CATALYTIC ACTIVITY</scope>
    <scope>COFACTOR</scope>
    <scope>BIOPHYSICOCHEMICAL PROPERTIES</scope>
    <scope>SUBCELLULAR LOCATION</scope>
    <scope>TISSUE SPECIFICITY</scope>
    <scope>DEVELOPMENTAL STAGE</scope>
</reference>
<reference evidence="19" key="5">
    <citation type="journal article" date="1998" name="Int. Arch. Allergy Immunol.">
        <title>Expression and rapid purification of an Aedes aegypti salivary allergen by a baculovirus system.</title>
        <authorList>
            <person name="Xu W."/>
            <person name="Simons F.E."/>
            <person name="Peng Z."/>
        </authorList>
    </citation>
    <scope>ALLERGEN</scope>
</reference>
<reference evidence="19" key="6">
    <citation type="journal article" date="1998" name="J. Allergy Clin. Immunol.">
        <title>Immunoblot analysis of salivary allergens in 10 mosquito species with worldwide distribution and the human IgE responses to these allergens.</title>
        <authorList>
            <person name="Peng Z."/>
            <person name="Li H."/>
            <person name="Simons F.E."/>
        </authorList>
    </citation>
    <scope>SUBCELLULAR LOCATION</scope>
    <scope>TISSUE SPECIFICITY</scope>
    <scope>ALLERGEN</scope>
</reference>
<reference evidence="19" key="7">
    <citation type="journal article" date="2001" name="Int. Immunol.">
        <title>Expression, purification, characterization and clinical relevance of rAed a 1--a 68-kDa recombinant mosquito Aedes aegypti salivary allergen.</title>
        <authorList>
            <person name="Peng Z."/>
            <person name="Xu W."/>
            <person name="James A.A."/>
            <person name="Lam H."/>
            <person name="Sun D."/>
            <person name="Cheng L."/>
            <person name="Simons F.E."/>
        </authorList>
    </citation>
    <scope>ALLERGEN</scope>
</reference>
<reference evidence="19" key="8">
    <citation type="journal article" date="2006" name="Platelets">
        <title>Expression of functional recombinant mosquito salivary apyrase: a potential therapeutic platelet aggregation inhibitor.</title>
        <authorList>
            <person name="Sun D."/>
            <person name="McNicol A."/>
            <person name="James A.A."/>
            <person name="Peng Z."/>
        </authorList>
    </citation>
    <scope>FUNCTION</scope>
    <scope>CATALYTIC ACTIVITY</scope>
    <scope>BIOPHYSICOCHEMICAL PROPERTIES</scope>
</reference>
<reference key="9">
    <citation type="journal article" date="2007" name="Microbes Infect.">
        <title>Antibody response against saliva antigens of Anopheles gambiae and Aedes aegypti in travellers in tropical Africa.</title>
        <authorList>
            <person name="Orlandi-Pradines E."/>
            <person name="Almeras L."/>
            <person name="Denis de Senneville L."/>
            <person name="Barbe S."/>
            <person name="Remoue F."/>
            <person name="Villard C."/>
            <person name="Cornelie S."/>
            <person name="Penhoat K."/>
            <person name="Pascual A."/>
            <person name="Bourgouin C."/>
            <person name="Fontenille D."/>
            <person name="Bonnet J."/>
            <person name="Corre-Catelin N."/>
            <person name="Reiter P."/>
            <person name="Pages F."/>
            <person name="Laffite D."/>
            <person name="Boulanger D."/>
            <person name="Simondon F."/>
            <person name="Pradines B."/>
            <person name="Fusai T."/>
            <person name="Rogier C."/>
        </authorList>
    </citation>
    <scope>IDENTIFICATION BY MASS SPECTROMETRY</scope>
    <scope>SUBCELLULAR LOCATION</scope>
    <scope>TISSUE SPECIFICITY</scope>
</reference>
<reference key="10">
    <citation type="journal article" date="2019" name="Insect Biochem. Mol. Biol.">
        <title>A salivary protein of Aedes aegypti promotes dengue-2 virus replication and transmission.</title>
        <authorList>
            <person name="Sri-In C."/>
            <person name="Weng S.C."/>
            <person name="Chen W.Y."/>
            <person name="Wu-Hsieh B.A."/>
            <person name="Tu W.C."/>
            <person name="Shiao S.H."/>
        </authorList>
    </citation>
    <scope>TISSUE SPECIFICITY</scope>
    <scope>INDUCTION (MICROBIAL INFECTION)</scope>
    <scope>DISRUPTION PHENOTYPE (MICROBIAL INFECTION)</scope>
</reference>
<reference key="11">
    <citation type="journal article" date="2022" name="Viruses">
        <title>Multiple Salivary Proteins from Aedes aegypti Mosquito Bind to the Zika Virus Envelope Protein.</title>
        <authorList>
            <person name="Valenzuela-Leon P.C."/>
            <person name="Shrivastava G."/>
            <person name="Martin-Martin I."/>
            <person name="Cardenas J.C."/>
            <person name="Londono-Renteria B."/>
            <person name="Calvo E."/>
        </authorList>
    </citation>
    <scope>FUNCTION (MICROBIAL INFECTION)</scope>
    <scope>INTERACTION WITH ZIKA VIRUS ENVELOPE PROTEIN E</scope>
</reference>
<evidence type="ECO:0000250" key="1">
    <source>
        <dbReference type="UniProtKB" id="P21589"/>
    </source>
</evidence>
<evidence type="ECO:0000255" key="2"/>
<evidence type="ECO:0000269" key="3">
    <source>
    </source>
</evidence>
<evidence type="ECO:0000269" key="4">
    <source>
    </source>
</evidence>
<evidence type="ECO:0000269" key="5">
    <source>
    </source>
</evidence>
<evidence type="ECO:0000269" key="6">
    <source>
    </source>
</evidence>
<evidence type="ECO:0000269" key="7">
    <source>
    </source>
</evidence>
<evidence type="ECO:0000269" key="8">
    <source>
    </source>
</evidence>
<evidence type="ECO:0000269" key="9">
    <source>
    </source>
</evidence>
<evidence type="ECO:0000269" key="10">
    <source>
    </source>
</evidence>
<evidence type="ECO:0000269" key="11">
    <source>
    </source>
</evidence>
<evidence type="ECO:0000269" key="12">
    <source>
    </source>
</evidence>
<evidence type="ECO:0000303" key="13">
    <source>
    </source>
</evidence>
<evidence type="ECO:0000303" key="14">
    <source>
    </source>
</evidence>
<evidence type="ECO:0000303" key="15">
    <source>
    </source>
</evidence>
<evidence type="ECO:0000303" key="16">
    <source>
    </source>
</evidence>
<evidence type="ECO:0000303" key="17">
    <source>
    </source>
</evidence>
<evidence type="ECO:0000303" key="18">
    <source>
    </source>
</evidence>
<evidence type="ECO:0000305" key="19"/>
<proteinExistence type="evidence at protein level"/>
<name>APY_AEDAE</name>
<comment type="function">
    <text evidence="4 8 10">Facilitates hematophagy by preventing ADP-, collagen- and thrombin-dependent platelet aggregation in the host (PubMed:16702045). Cleaves adenosine triphosphate (ATP) and adenosine diphosphate (ADP) to adenosine monophosphate (AMP) and inorganic phosphate (PubMed:16702045, PubMed:6094095, PubMed:7846038). May reduce probing time by facilitating the speed of locating blood.</text>
</comment>
<comment type="function">
    <text evidence="7">(Microbial infection) Does not affect Zika virus replication in human endothelial cells and keratinocytes.</text>
</comment>
<comment type="catalytic activity">
    <reaction evidence="4 8 10">
        <text>a ribonucleoside 5'-triphosphate + 2 H2O = a ribonucleoside 5'-phosphate + 2 phosphate + 2 H(+)</text>
        <dbReference type="Rhea" id="RHEA:36795"/>
        <dbReference type="ChEBI" id="CHEBI:15377"/>
        <dbReference type="ChEBI" id="CHEBI:15378"/>
        <dbReference type="ChEBI" id="CHEBI:43474"/>
        <dbReference type="ChEBI" id="CHEBI:58043"/>
        <dbReference type="ChEBI" id="CHEBI:61557"/>
        <dbReference type="EC" id="3.6.1.5"/>
    </reaction>
    <physiologicalReaction direction="left-to-right" evidence="19">
        <dbReference type="Rhea" id="RHEA:36796"/>
    </physiologicalReaction>
</comment>
<comment type="cofactor">
    <cofactor evidence="8">
        <name>a divalent metal cation</name>
        <dbReference type="ChEBI" id="CHEBI:60240"/>
    </cofactor>
</comment>
<comment type="biophysicochemical properties">
    <kinetics>
        <KM evidence="4">12.5 uM for ADP</KM>
        <KM evidence="4">15 uM for ATP</KM>
    </kinetics>
    <phDependence>
        <text evidence="8">Optimum pH is 9.0.</text>
    </phDependence>
</comment>
<comment type="subunit">
    <text evidence="7">(Microbial infection) Interacts with Zika virus envelope protein E and Zika virus-like particles; the interaction does not affect Zika virus replication in human endothelial cells and keratinocytes.</text>
</comment>
<comment type="subcellular location">
    <subcellularLocation>
        <location evidence="5 8 12">Secreted</location>
    </subcellularLocation>
</comment>
<comment type="tissue specificity">
    <text evidence="5 6 8 9 10 12">Female saliva (at protein level) (PubMed:9564803, PubMed:17913537). Female salivary gland (at protein level) (PubMed:6094095, PubMed:7846038). Not detected or low-level expression in female carcasses without salivary glands (PubMed:31265906, PubMed:7498420). Not detected in male tissues (PubMed:7498420).</text>
</comment>
<comment type="developmental stage">
    <text evidence="8 9">Not detected or low levels in females on the first day after eclosion (at protein level) (PubMed:6094095, PubMed:7498420). Expressed in females on the second day after eclosion (at protein level) (PubMed:6094095, PubMed:7498420). Maximally expressed in females by day 2-4 after eclosion (at protein level) (PubMed:7498420). Not detected in embryos, larvae or pupae (at protein level) (PubMed:7498420).</text>
</comment>
<comment type="induction">
    <text evidence="6">(Microbial infection) Dengue virus infection does not affect expression levels.</text>
</comment>
<comment type="PTM">
    <text>The N-terminus is blocked.</text>
</comment>
<comment type="disruption phenotype">
    <text evidence="6">(Microbial infection) RNAi-mediated knockdown does not affect dengue virus type 2 replication in salivary glands after infection.</text>
</comment>
<comment type="allergen">
    <text evidence="3 11 12">Causes an allergic reaction in human (PubMed:11717185, PubMed:9531167, PubMed:9564803). Binds to IgE (PubMed:11717185, PubMed:9531167, PubMed:9564803).</text>
</comment>
<comment type="miscellaneous">
    <text evidence="7">Patients with dengue virus or Zika virus infections during the acute or early convalescence phase have higher levels of IgG serum antibodies against the protein.</text>
</comment>
<comment type="similarity">
    <text evidence="19">Belongs to the 5'-nucleotidase family.</text>
</comment>
<organism>
    <name type="scientific">Aedes aegypti</name>
    <name type="common">Yellowfever mosquito</name>
    <name type="synonym">Culex aegypti</name>
    <dbReference type="NCBI Taxonomy" id="7159"/>
    <lineage>
        <taxon>Eukaryota</taxon>
        <taxon>Metazoa</taxon>
        <taxon>Ecdysozoa</taxon>
        <taxon>Arthropoda</taxon>
        <taxon>Hexapoda</taxon>
        <taxon>Insecta</taxon>
        <taxon>Pterygota</taxon>
        <taxon>Neoptera</taxon>
        <taxon>Endopterygota</taxon>
        <taxon>Diptera</taxon>
        <taxon>Nematocera</taxon>
        <taxon>Culicoidea</taxon>
        <taxon>Culicidae</taxon>
        <taxon>Culicinae</taxon>
        <taxon>Aedini</taxon>
        <taxon>Aedes</taxon>
        <taxon>Stegomyia</taxon>
    </lineage>
</organism>
<feature type="signal peptide" evidence="2">
    <location>
        <begin position="1"/>
        <end position="24"/>
    </location>
</feature>
<feature type="chain" id="PRO_0000000039" description="Apyrase">
    <location>
        <begin position="25"/>
        <end position="562"/>
    </location>
</feature>
<feature type="binding site" evidence="1">
    <location>
        <position position="47"/>
    </location>
    <ligand>
        <name>a divalent metal cation</name>
        <dbReference type="ChEBI" id="CHEBI:60240"/>
        <label>1</label>
    </ligand>
</feature>
<feature type="binding site" evidence="1">
    <location>
        <position position="49"/>
    </location>
    <ligand>
        <name>a divalent metal cation</name>
        <dbReference type="ChEBI" id="CHEBI:60240"/>
        <label>1</label>
    </ligand>
</feature>
<feature type="binding site" evidence="1">
    <location>
        <position position="98"/>
    </location>
    <ligand>
        <name>a divalent metal cation</name>
        <dbReference type="ChEBI" id="CHEBI:60240"/>
        <label>1</label>
    </ligand>
</feature>
<feature type="binding site" evidence="1">
    <location>
        <position position="98"/>
    </location>
    <ligand>
        <name>a divalent metal cation</name>
        <dbReference type="ChEBI" id="CHEBI:60240"/>
        <label>2</label>
    </ligand>
</feature>
<feature type="binding site" evidence="1">
    <location>
        <position position="130"/>
    </location>
    <ligand>
        <name>a divalent metal cation</name>
        <dbReference type="ChEBI" id="CHEBI:60240"/>
        <label>2</label>
    </ligand>
</feature>
<feature type="binding site" evidence="1">
    <location>
        <position position="233"/>
    </location>
    <ligand>
        <name>a divalent metal cation</name>
        <dbReference type="ChEBI" id="CHEBI:60240"/>
        <label>2</label>
    </ligand>
</feature>
<feature type="binding site" evidence="1">
    <location>
        <position position="257"/>
    </location>
    <ligand>
        <name>a divalent metal cation</name>
        <dbReference type="ChEBI" id="CHEBI:60240"/>
        <label>2</label>
    </ligand>
</feature>
<feature type="binding site" evidence="1">
    <location>
        <position position="370"/>
    </location>
    <ligand>
        <name>AMP</name>
        <dbReference type="ChEBI" id="CHEBI:456215"/>
    </ligand>
</feature>
<feature type="binding site" evidence="1">
    <location>
        <position position="405"/>
    </location>
    <ligand>
        <name>AMP</name>
        <dbReference type="ChEBI" id="CHEBI:456215"/>
    </ligand>
</feature>
<feature type="binding site" evidence="1">
    <location>
        <position position="424"/>
    </location>
    <ligand>
        <name>AMP</name>
        <dbReference type="ChEBI" id="CHEBI:456215"/>
    </ligand>
</feature>
<feature type="binding site" evidence="1">
    <location>
        <position position="514"/>
    </location>
    <ligand>
        <name>AMP</name>
        <dbReference type="ChEBI" id="CHEBI:456215"/>
    </ligand>
</feature>
<feature type="site" description="Transition state stabilizer" evidence="1">
    <location>
        <position position="131"/>
    </location>
</feature>
<feature type="site" description="Transition state stabilizer" evidence="1">
    <location>
        <position position="134"/>
    </location>
</feature>
<feature type="glycosylation site" description="N-linked (GlcNAc...) asparagine" evidence="2">
    <location>
        <position position="112"/>
    </location>
</feature>
<feature type="glycosylation site" description="N-linked (GlcNAc...) asparagine" evidence="2">
    <location>
        <position position="390"/>
    </location>
</feature>
<feature type="sequence variant" description="In strain: Rockefeller.">
    <original>E</original>
    <variation>A</variation>
    <location>
        <position position="9"/>
    </location>
</feature>
<feature type="sequence variant" description="In strain: Rockefeller.">
    <original>V</original>
    <variation>P</variation>
    <location>
        <position position="30"/>
    </location>
</feature>
<feature type="sequence variant" description="In strain: Rockefeller.">
    <original>V</original>
    <variation>A</variation>
    <location>
        <position position="61"/>
    </location>
</feature>
<feature type="sequence variant" description="In strain: Rockefeller.">
    <original>N</original>
    <variation>K</variation>
    <location>
        <position position="224"/>
    </location>
</feature>
<feature type="sequence variant" description="In strain: Rockefeller.">
    <original>L</original>
    <variation>I</variation>
    <location>
        <position position="284"/>
    </location>
</feature>
<feature type="sequence variant" description="In strain: Rockefeller.">
    <original>EE</original>
    <variation>DT</variation>
    <location>
        <begin position="314"/>
        <end position="315"/>
    </location>
</feature>
<feature type="sequence variant" description="In strain: Rockefeller.">
    <original>KN</original>
    <variation>QH</variation>
    <location>
        <begin position="319"/>
        <end position="320"/>
    </location>
</feature>
<feature type="sequence variant" description="In strain: Rockefeller.">
    <original>A</original>
    <variation>E</variation>
    <location>
        <position position="347"/>
    </location>
</feature>
<feature type="sequence variant" description="In strain: Rockefeller.">
    <original>M</original>
    <variation>K</variation>
    <location>
        <position position="361"/>
    </location>
</feature>
<feature type="sequence variant" description="In strain: Rockefeller.">
    <original>V</original>
    <variation>I</variation>
    <location>
        <position position="472"/>
    </location>
</feature>
<feature type="sequence variant" description="In strain: Rockefeller.">
    <original>K</original>
    <variation>E</variation>
    <location>
        <position position="491"/>
    </location>
</feature>
<feature type="sequence variant" description="In strain: Rockefeller.">
    <original>E</original>
    <variation>Q</variation>
    <location>
        <position position="498"/>
    </location>
</feature>
<feature type="sequence conflict" description="In Ref. 2; AAA99189." evidence="19" ref="2">
    <original>V</original>
    <variation>A</variation>
    <location>
        <position position="30"/>
    </location>
</feature>
<feature type="sequence conflict" description="In Ref. 2; AAA99189." evidence="19" ref="2">
    <original>G</original>
    <variation>GG</variation>
    <location>
        <position position="358"/>
    </location>
</feature>
<accession>P50635</accession>
<accession>Q176L2</accession>
<gene>
    <name evidence="15 16" type="primary">APY</name>
    <name type="ORF">AAEL006347</name>
</gene>
<dbReference type="EC" id="3.6.1.5" evidence="4 10"/>
<dbReference type="EMBL" id="L12389">
    <property type="protein sequence ID" value="AAC37218.1"/>
    <property type="molecule type" value="mRNA"/>
</dbReference>
<dbReference type="EMBL" id="L41391">
    <property type="protein sequence ID" value="AAA99189.1"/>
    <property type="molecule type" value="Genomic_DNA"/>
</dbReference>
<dbReference type="EMBL" id="CH477386">
    <property type="protein sequence ID" value="EAT42070.1"/>
    <property type="molecule type" value="Genomic_DNA"/>
</dbReference>
<dbReference type="RefSeq" id="XP_001651910.1">
    <property type="nucleotide sequence ID" value="XM_001651860.1"/>
</dbReference>
<dbReference type="SMR" id="P50635"/>
<dbReference type="STRING" id="7159.P50635"/>
<dbReference type="Allergome" id="3">
    <property type="allergen name" value="Aed a 1"/>
</dbReference>
<dbReference type="Allergome" id="3539">
    <property type="allergen name" value="Aed a 1.0101"/>
</dbReference>
<dbReference type="GlyCosmos" id="P50635">
    <property type="glycosylation" value="2 sites, No reported glycans"/>
</dbReference>
<dbReference type="PaxDb" id="7159-AAEL006347-PA"/>
<dbReference type="GeneID" id="5567877"/>
<dbReference type="KEGG" id="aag:5567877"/>
<dbReference type="VEuPathDB" id="VectorBase:AAEL006347"/>
<dbReference type="eggNOG" id="KOG4419">
    <property type="taxonomic scope" value="Eukaryota"/>
</dbReference>
<dbReference type="HOGENOM" id="CLU_005854_7_1_1"/>
<dbReference type="InParanoid" id="P50635"/>
<dbReference type="OMA" id="RESCRWC"/>
<dbReference type="OrthoDB" id="7722975at2759"/>
<dbReference type="PhylomeDB" id="P50635"/>
<dbReference type="Proteomes" id="UP000008820">
    <property type="component" value="Unassembled WGS sequence"/>
</dbReference>
<dbReference type="Proteomes" id="UP000682892">
    <property type="component" value="Unassembled WGS sequence"/>
</dbReference>
<dbReference type="GO" id="GO:0005615">
    <property type="term" value="C:extracellular space"/>
    <property type="evidence" value="ECO:0000314"/>
    <property type="project" value="UniProtKB"/>
</dbReference>
<dbReference type="GO" id="GO:0005886">
    <property type="term" value="C:plasma membrane"/>
    <property type="evidence" value="ECO:0007669"/>
    <property type="project" value="TreeGrafter"/>
</dbReference>
<dbReference type="GO" id="GO:0008253">
    <property type="term" value="F:5'-nucleotidase activity"/>
    <property type="evidence" value="ECO:0007669"/>
    <property type="project" value="TreeGrafter"/>
</dbReference>
<dbReference type="GO" id="GO:0004050">
    <property type="term" value="F:apyrase activity"/>
    <property type="evidence" value="ECO:0007669"/>
    <property type="project" value="UniProtKB-EC"/>
</dbReference>
<dbReference type="GO" id="GO:0005524">
    <property type="term" value="F:ATP binding"/>
    <property type="evidence" value="ECO:0007669"/>
    <property type="project" value="UniProtKB-KW"/>
</dbReference>
<dbReference type="GO" id="GO:0046872">
    <property type="term" value="F:metal ion binding"/>
    <property type="evidence" value="ECO:0007669"/>
    <property type="project" value="UniProtKB-KW"/>
</dbReference>
<dbReference type="GO" id="GO:0090729">
    <property type="term" value="F:toxin activity"/>
    <property type="evidence" value="ECO:0007669"/>
    <property type="project" value="UniProtKB-KW"/>
</dbReference>
<dbReference type="GO" id="GO:0006196">
    <property type="term" value="P:AMP catabolic process"/>
    <property type="evidence" value="ECO:0007669"/>
    <property type="project" value="TreeGrafter"/>
</dbReference>
<dbReference type="CDD" id="cd07409">
    <property type="entry name" value="MPP_CD73_N"/>
    <property type="match status" value="1"/>
</dbReference>
<dbReference type="FunFam" id="3.60.21.10:FF:000020">
    <property type="entry name" value="NT5E isoform 4"/>
    <property type="match status" value="1"/>
</dbReference>
<dbReference type="FunFam" id="3.90.780.10:FF:000004">
    <property type="entry name" value="UDP-sugar hydrolase, putative"/>
    <property type="match status" value="1"/>
</dbReference>
<dbReference type="Gene3D" id="3.60.21.10">
    <property type="match status" value="1"/>
</dbReference>
<dbReference type="Gene3D" id="3.90.780.10">
    <property type="entry name" value="5'-Nucleotidase, C-terminal domain"/>
    <property type="match status" value="1"/>
</dbReference>
<dbReference type="InterPro" id="IPR008334">
    <property type="entry name" value="5'-Nucleotdase_C"/>
</dbReference>
<dbReference type="InterPro" id="IPR036907">
    <property type="entry name" value="5'-Nucleotdase_C_sf"/>
</dbReference>
<dbReference type="InterPro" id="IPR006146">
    <property type="entry name" value="5'-Nucleotdase_CS"/>
</dbReference>
<dbReference type="InterPro" id="IPR006179">
    <property type="entry name" value="5_nucleotidase/apyrase"/>
</dbReference>
<dbReference type="InterPro" id="IPR004843">
    <property type="entry name" value="Calcineurin-like_PHP_ApaH"/>
</dbReference>
<dbReference type="InterPro" id="IPR029052">
    <property type="entry name" value="Metallo-depent_PP-like"/>
</dbReference>
<dbReference type="PANTHER" id="PTHR11575">
    <property type="entry name" value="5'-NUCLEOTIDASE-RELATED"/>
    <property type="match status" value="1"/>
</dbReference>
<dbReference type="PANTHER" id="PTHR11575:SF32">
    <property type="entry name" value="APYRASE-LIKE PROTEIN"/>
    <property type="match status" value="1"/>
</dbReference>
<dbReference type="Pfam" id="PF02872">
    <property type="entry name" value="5_nucleotid_C"/>
    <property type="match status" value="1"/>
</dbReference>
<dbReference type="Pfam" id="PF00149">
    <property type="entry name" value="Metallophos"/>
    <property type="match status" value="1"/>
</dbReference>
<dbReference type="PRINTS" id="PR01607">
    <property type="entry name" value="APYRASEFAMLY"/>
</dbReference>
<dbReference type="SUPFAM" id="SSF55816">
    <property type="entry name" value="5'-nucleotidase (syn. UDP-sugar hydrolase), C-terminal domain"/>
    <property type="match status" value="1"/>
</dbReference>
<dbReference type="SUPFAM" id="SSF56300">
    <property type="entry name" value="Metallo-dependent phosphatases"/>
    <property type="match status" value="1"/>
</dbReference>
<dbReference type="PROSITE" id="PS00785">
    <property type="entry name" value="5_NUCLEOTIDASE_1"/>
    <property type="match status" value="1"/>
</dbReference>
<dbReference type="PROSITE" id="PS00786">
    <property type="entry name" value="5_NUCLEOTIDASE_2"/>
    <property type="match status" value="1"/>
</dbReference>
<keyword id="KW-0020">Allergen</keyword>
<keyword id="KW-0067">ATP-binding</keyword>
<keyword id="KW-0903">Direct protein sequencing</keyword>
<keyword id="KW-0325">Glycoprotein</keyword>
<keyword id="KW-1199">Hemostasis impairing toxin</keyword>
<keyword id="KW-0378">Hydrolase</keyword>
<keyword id="KW-0479">Metal-binding</keyword>
<keyword id="KW-0547">Nucleotide-binding</keyword>
<keyword id="KW-1201">Platelet aggregation inhibiting toxin</keyword>
<keyword id="KW-1185">Reference proteome</keyword>
<keyword id="KW-0964">Secreted</keyword>
<keyword id="KW-0732">Signal</keyword>
<keyword id="KW-0800">Toxin</keyword>